<protein>
    <recommendedName>
        <fullName>Putative sulfur carrier protein TM_0983</fullName>
    </recommendedName>
</protein>
<reference key="1">
    <citation type="journal article" date="1999" name="Nature">
        <title>Evidence for lateral gene transfer between Archaea and Bacteria from genome sequence of Thermotoga maritima.</title>
        <authorList>
            <person name="Nelson K.E."/>
            <person name="Clayton R.A."/>
            <person name="Gill S.R."/>
            <person name="Gwinn M.L."/>
            <person name="Dodson R.J."/>
            <person name="Haft D.H."/>
            <person name="Hickey E.K."/>
            <person name="Peterson J.D."/>
            <person name="Nelson W.C."/>
            <person name="Ketchum K.A."/>
            <person name="McDonald L.A."/>
            <person name="Utterback T.R."/>
            <person name="Malek J.A."/>
            <person name="Linher K.D."/>
            <person name="Garrett M.M."/>
            <person name="Stewart A.M."/>
            <person name="Cotton M.D."/>
            <person name="Pratt M.S."/>
            <person name="Phillips C.A."/>
            <person name="Richardson D.L."/>
            <person name="Heidelberg J.F."/>
            <person name="Sutton G.G."/>
            <person name="Fleischmann R.D."/>
            <person name="Eisen J.A."/>
            <person name="White O."/>
            <person name="Salzberg S.L."/>
            <person name="Smith H.O."/>
            <person name="Venter J.C."/>
            <person name="Fraser C.M."/>
        </authorList>
    </citation>
    <scope>NUCLEOTIDE SEQUENCE [LARGE SCALE GENOMIC DNA]</scope>
    <source>
        <strain>ATCC 43589 / DSM 3109 / JCM 10099 / NBRC 100826 / MSB8</strain>
    </source>
</reference>
<reference key="2">
    <citation type="journal article" date="2002" name="Proc. Natl. Acad. Sci. U.S.A.">
        <title>An NMR approach to structural proteomics.</title>
        <authorList>
            <person name="Yee A."/>
            <person name="Chang X."/>
            <person name="Pineda-Lucena A."/>
            <person name="Wu B."/>
            <person name="Semesi A."/>
            <person name="Le B."/>
            <person name="Ramelot T."/>
            <person name="Lee G.M."/>
            <person name="Bhattacharyya S."/>
            <person name="Gutierrez P."/>
            <person name="Denisov A."/>
            <person name="Lee C.-H."/>
            <person name="Cort J.R."/>
            <person name="Kozlov G."/>
            <person name="Liao J."/>
            <person name="Finak G."/>
            <person name="Chen L."/>
            <person name="Wishart D."/>
            <person name="Lee W."/>
            <person name="McIntosh L.P."/>
            <person name="Gehring K."/>
            <person name="Kennedy M.A."/>
            <person name="Edwards A.M."/>
            <person name="Arrowsmith C.H."/>
        </authorList>
    </citation>
    <scope>STRUCTURE BY NMR</scope>
</reference>
<organism>
    <name type="scientific">Thermotoga maritima (strain ATCC 43589 / DSM 3109 / JCM 10099 / NBRC 100826 / MSB8)</name>
    <dbReference type="NCBI Taxonomy" id="243274"/>
    <lineage>
        <taxon>Bacteria</taxon>
        <taxon>Thermotogati</taxon>
        <taxon>Thermotogota</taxon>
        <taxon>Thermotogae</taxon>
        <taxon>Thermotogales</taxon>
        <taxon>Thermotogaceae</taxon>
        <taxon>Thermotoga</taxon>
    </lineage>
</organism>
<sequence>MAKYQVTKTLDVRGEVCPVPDVETKRALQNMKPGEILEVWIDYPMSKERIPETVKKLGHEVLEIEEVGPSEWKIYIKVK</sequence>
<accession>Q9X078</accession>
<dbReference type="EMBL" id="AE000512">
    <property type="protein sequence ID" value="AAD36062.1"/>
    <property type="molecule type" value="Genomic_DNA"/>
</dbReference>
<dbReference type="PIR" id="D72310">
    <property type="entry name" value="D72310"/>
</dbReference>
<dbReference type="RefSeq" id="NP_228791.1">
    <property type="nucleotide sequence ID" value="NC_000853.1"/>
</dbReference>
<dbReference type="RefSeq" id="WP_004080581.1">
    <property type="nucleotide sequence ID" value="NZ_CP011107.1"/>
</dbReference>
<dbReference type="PDB" id="1JDQ">
    <property type="method" value="NMR"/>
    <property type="chains" value="A=1-79"/>
</dbReference>
<dbReference type="PDBsum" id="1JDQ"/>
<dbReference type="BMRB" id="Q9X078"/>
<dbReference type="SMR" id="Q9X078"/>
<dbReference type="FunCoup" id="Q9X078">
    <property type="interactions" value="50"/>
</dbReference>
<dbReference type="STRING" id="243274.TM_0983"/>
<dbReference type="PaxDb" id="243274-THEMA_09435"/>
<dbReference type="EnsemblBacteria" id="AAD36062">
    <property type="protein sequence ID" value="AAD36062"/>
    <property type="gene ID" value="TM_0983"/>
</dbReference>
<dbReference type="KEGG" id="tma:TM0983"/>
<dbReference type="KEGG" id="tmi:THEMA_09435"/>
<dbReference type="KEGG" id="tmm:Tmari_0986"/>
<dbReference type="KEGG" id="tmw:THMA_1005"/>
<dbReference type="eggNOG" id="COG0425">
    <property type="taxonomic scope" value="Bacteria"/>
</dbReference>
<dbReference type="InParanoid" id="Q9X078"/>
<dbReference type="OrthoDB" id="9800872at2"/>
<dbReference type="EvolutionaryTrace" id="Q9X078"/>
<dbReference type="Proteomes" id="UP000008183">
    <property type="component" value="Chromosome"/>
</dbReference>
<dbReference type="CDD" id="cd00291">
    <property type="entry name" value="SirA_YedF_YeeD"/>
    <property type="match status" value="1"/>
</dbReference>
<dbReference type="Gene3D" id="3.30.110.40">
    <property type="entry name" value="TusA-like domain"/>
    <property type="match status" value="1"/>
</dbReference>
<dbReference type="InterPro" id="IPR001455">
    <property type="entry name" value="TusA-like"/>
</dbReference>
<dbReference type="InterPro" id="IPR036868">
    <property type="entry name" value="TusA-like_sf"/>
</dbReference>
<dbReference type="PANTHER" id="PTHR33279">
    <property type="entry name" value="SULFUR CARRIER PROTEIN YEDF-RELATED"/>
    <property type="match status" value="1"/>
</dbReference>
<dbReference type="PANTHER" id="PTHR33279:SF6">
    <property type="entry name" value="SULFUR CARRIER PROTEIN YEDF-RELATED"/>
    <property type="match status" value="1"/>
</dbReference>
<dbReference type="Pfam" id="PF01206">
    <property type="entry name" value="TusA"/>
    <property type="match status" value="1"/>
</dbReference>
<dbReference type="SUPFAM" id="SSF64307">
    <property type="entry name" value="SirA-like"/>
    <property type="match status" value="1"/>
</dbReference>
<dbReference type="PROSITE" id="PS01148">
    <property type="entry name" value="UPF0033"/>
    <property type="match status" value="1"/>
</dbReference>
<keyword id="KW-0002">3D-structure</keyword>
<keyword id="KW-1185">Reference proteome</keyword>
<proteinExistence type="evidence at protein level"/>
<comment type="similarity">
    <text evidence="2">Belongs to the sulfur carrier protein TusA family.</text>
</comment>
<evidence type="ECO:0000250" key="1">
    <source>
        <dbReference type="UniProtKB" id="P0A890"/>
    </source>
</evidence>
<evidence type="ECO:0000305" key="2"/>
<evidence type="ECO:0007829" key="3">
    <source>
        <dbReference type="PDB" id="1JDQ"/>
    </source>
</evidence>
<feature type="chain" id="PRO_0000159075" description="Putative sulfur carrier protein TM_0983">
    <location>
        <begin position="1"/>
        <end position="79"/>
    </location>
</feature>
<feature type="active site" description="Cysteine persulfide intermediate" evidence="1">
    <location>
        <position position="17"/>
    </location>
</feature>
<feature type="strand" evidence="3">
    <location>
        <begin position="8"/>
        <end position="11"/>
    </location>
</feature>
<feature type="helix" evidence="3">
    <location>
        <begin position="19"/>
        <end position="29"/>
    </location>
</feature>
<feature type="strand" evidence="3">
    <location>
        <begin position="36"/>
        <end position="43"/>
    </location>
</feature>
<feature type="helix" evidence="3">
    <location>
        <begin position="46"/>
        <end position="56"/>
    </location>
</feature>
<feature type="strand" evidence="3">
    <location>
        <begin position="61"/>
        <end position="66"/>
    </location>
</feature>
<feature type="strand" evidence="3">
    <location>
        <begin position="68"/>
        <end position="70"/>
    </location>
</feature>
<feature type="strand" evidence="3">
    <location>
        <begin position="72"/>
        <end position="77"/>
    </location>
</feature>
<name>Y983_THEMA</name>
<gene>
    <name type="ordered locus">TM_0983</name>
</gene>